<feature type="chain" id="PRO_0000233165" description="Zinc finger protein 82">
    <location>
        <begin position="1"/>
        <end position="530"/>
    </location>
</feature>
<feature type="domain" description="KRAB" evidence="3">
    <location>
        <begin position="6"/>
        <end position="77"/>
    </location>
</feature>
<feature type="zinc finger region" description="C2H2-type 1" evidence="2">
    <location>
        <begin position="168"/>
        <end position="190"/>
    </location>
</feature>
<feature type="zinc finger region" description="C2H2-type 2" evidence="2">
    <location>
        <begin position="196"/>
        <end position="218"/>
    </location>
</feature>
<feature type="zinc finger region" description="C2H2-type 3" evidence="2">
    <location>
        <begin position="224"/>
        <end position="246"/>
    </location>
</feature>
<feature type="zinc finger region" description="C2H2-type 4" evidence="2">
    <location>
        <begin position="252"/>
        <end position="274"/>
    </location>
</feature>
<feature type="zinc finger region" description="C2H2-type 5; degenerate" evidence="2">
    <location>
        <begin position="280"/>
        <end position="302"/>
    </location>
</feature>
<feature type="zinc finger region" description="C2H2-type 6" evidence="2">
    <location>
        <begin position="308"/>
        <end position="330"/>
    </location>
</feature>
<feature type="zinc finger region" description="C2H2-type 7" evidence="2">
    <location>
        <begin position="336"/>
        <end position="358"/>
    </location>
</feature>
<feature type="zinc finger region" description="C2H2-type 8" evidence="2">
    <location>
        <begin position="364"/>
        <end position="386"/>
    </location>
</feature>
<feature type="zinc finger region" description="C2H2-type 9" evidence="2">
    <location>
        <begin position="392"/>
        <end position="414"/>
    </location>
</feature>
<feature type="zinc finger region" description="C2H2-type 10" evidence="2">
    <location>
        <begin position="420"/>
        <end position="442"/>
    </location>
</feature>
<feature type="zinc finger region" description="C2H2-type 11" evidence="2">
    <location>
        <begin position="448"/>
        <end position="470"/>
    </location>
</feature>
<feature type="zinc finger region" description="C2H2-type 12" evidence="2">
    <location>
        <begin position="476"/>
        <end position="498"/>
    </location>
</feature>
<feature type="zinc finger region" description="C2H2-type 13" evidence="2">
    <location>
        <begin position="504"/>
        <end position="526"/>
    </location>
</feature>
<feature type="cross-link" description="Glycyl lysine isopeptide (Lys-Gly) (interchain with G-Cter in SUMO2)" evidence="1">
    <location>
        <position position="125"/>
    </location>
</feature>
<feature type="splice variant" id="VSP_018083" description="In isoform 2." evidence="4">
    <original>VRQRKPCPD</original>
    <variation>TMGDPGRTN</variation>
    <location>
        <begin position="68"/>
        <end position="76"/>
    </location>
</feature>
<feature type="splice variant" id="VSP_046230" description="In isoform 3." evidence="5">
    <original>DSETKDET</original>
    <variation>ARRDGASL</variation>
    <location>
        <begin position="76"/>
        <end position="83"/>
    </location>
</feature>
<feature type="splice variant" id="VSP_046231" description="In isoform 3." evidence="5">
    <location>
        <begin position="84"/>
        <end position="530"/>
    </location>
</feature>
<name>ZFP82_MOUSE</name>
<organism>
    <name type="scientific">Mus musculus</name>
    <name type="common">Mouse</name>
    <dbReference type="NCBI Taxonomy" id="10090"/>
    <lineage>
        <taxon>Eukaryota</taxon>
        <taxon>Metazoa</taxon>
        <taxon>Chordata</taxon>
        <taxon>Craniata</taxon>
        <taxon>Vertebrata</taxon>
        <taxon>Euteleostomi</taxon>
        <taxon>Mammalia</taxon>
        <taxon>Eutheria</taxon>
        <taxon>Euarchontoglires</taxon>
        <taxon>Glires</taxon>
        <taxon>Rodentia</taxon>
        <taxon>Myomorpha</taxon>
        <taxon>Muroidea</taxon>
        <taxon>Muridae</taxon>
        <taxon>Murinae</taxon>
        <taxon>Mus</taxon>
        <taxon>Mus</taxon>
    </lineage>
</organism>
<proteinExistence type="evidence at transcript level"/>
<comment type="function">
    <text>May be involved in transcriptional regulation.</text>
</comment>
<comment type="subcellular location">
    <subcellularLocation>
        <location evidence="6">Nucleus</location>
    </subcellularLocation>
</comment>
<comment type="alternative products">
    <event type="alternative splicing"/>
    <isoform>
        <id>Q6P9Y7-1</id>
        <name>1</name>
        <sequence type="displayed"/>
    </isoform>
    <isoform>
        <id>Q6P9Y7-2</id>
        <name>2</name>
        <sequence type="described" ref="VSP_018083"/>
    </isoform>
    <isoform>
        <id>Q6P9Y7-3</id>
        <name>3</name>
        <sequence type="described" ref="VSP_046230 VSP_046231"/>
    </isoform>
</comment>
<comment type="similarity">
    <text evidence="6">Belongs to the krueppel C2H2-type zinc-finger protein family.</text>
</comment>
<comment type="sequence caution" evidence="6">
    <conflict type="erroneous translation">
        <sequence resource="EMBL-CDS" id="BAC29755"/>
    </conflict>
    <text>Wrong choice of CDS.</text>
</comment>
<accession>Q6P9Y7</accession>
<accession>Q6ZPG0</accession>
<accession>Q8BIP1</accession>
<protein>
    <recommendedName>
        <fullName>Zinc finger protein 82</fullName>
        <shortName>Zfp-82</shortName>
    </recommendedName>
    <alternativeName>
        <fullName>Zinc finger protein 545</fullName>
    </alternativeName>
</protein>
<sequence>MARVSVVFSDVSIAFSQEEWESLDLEQRNLYKDVMMENYHNVASLGCFISKPDVISLLEQGKEPWKVVRQRKPCPDSETKDETNQVFSENGIYEMNLSQWKIMERIGNSGLKSLLLKNGWESRRKQERQEDPQEGYLSQVRHTSERVSSYEKRALTTRQRIHFVEKPYECNECGKAFRVRQQLTFHHRIHTGEKPYECKECGMAFRQTAHLTRHQRLHSGEKLYECKECGQAFIYGPELRAHQKLHTGEKPYTCRECGKAFRVRGQLTLHQRIHTGEKPYVCQECGKAFRQLAHLTRHQKLNVVDRLYECKECGKDFLCGSGLRVHHKLHTGEKPYECKDCGKAFRVRQQLTLHQRSHTGEKPYECTECGKTFSRGYHLILHHRIHTGEKPYECKECWKAFSRYSQLISHQSIHIGVKPYDCKDCGKAFRLLSQLTQHQSVHAGEKPYSCKECGKSFRLRQKLALHQSIHTGEKPFECKECRKAFRLNSSLIQHLRIHSGEKPYECKECKKAFRQHSHLTHHLKVHTVKV</sequence>
<dbReference type="EMBL" id="AK037211">
    <property type="protein sequence ID" value="BAC29755.1"/>
    <property type="status" value="ALT_SEQ"/>
    <property type="molecule type" value="mRNA"/>
</dbReference>
<dbReference type="EMBL" id="BC060530">
    <property type="protein sequence ID" value="AAH60530.1"/>
    <property type="molecule type" value="mRNA"/>
</dbReference>
<dbReference type="EMBL" id="AK129467">
    <property type="protein sequence ID" value="BAC98277.1"/>
    <property type="molecule type" value="mRNA"/>
</dbReference>
<dbReference type="CCDS" id="CCDS39876.1">
    <molecule id="Q6P9Y7-1"/>
</dbReference>
<dbReference type="CCDS" id="CCDS59724.1">
    <molecule id="Q6P9Y7-3"/>
</dbReference>
<dbReference type="RefSeq" id="NP_001239448.1">
    <property type="nucleotide sequence ID" value="NM_001252519.1"/>
</dbReference>
<dbReference type="RefSeq" id="NP_001240314.1">
    <molecule id="Q6P9Y7-3"/>
    <property type="nucleotide sequence ID" value="NM_001253385.2"/>
</dbReference>
<dbReference type="RefSeq" id="NP_808557.2">
    <molecule id="Q6P9Y7-1"/>
    <property type="nucleotide sequence ID" value="NM_177889.6"/>
</dbReference>
<dbReference type="SMR" id="Q6P9Y7"/>
<dbReference type="BioGRID" id="236978">
    <property type="interactions" value="2"/>
</dbReference>
<dbReference type="FunCoup" id="Q6P9Y7">
    <property type="interactions" value="1"/>
</dbReference>
<dbReference type="IntAct" id="Q6P9Y7">
    <property type="interactions" value="2"/>
</dbReference>
<dbReference type="STRING" id="10090.ENSMUSP00000079647"/>
<dbReference type="PhosphoSitePlus" id="Q6P9Y7"/>
<dbReference type="jPOST" id="Q6P9Y7"/>
<dbReference type="PaxDb" id="10090-ENSMUSP00000079647"/>
<dbReference type="ProteomicsDB" id="274988">
    <molecule id="Q6P9Y7-1"/>
</dbReference>
<dbReference type="ProteomicsDB" id="274989">
    <molecule id="Q6P9Y7-2"/>
</dbReference>
<dbReference type="Antibodypedia" id="16307">
    <property type="antibodies" value="127 antibodies from 20 providers"/>
</dbReference>
<dbReference type="DNASU" id="330502"/>
<dbReference type="Ensembl" id="ENSMUST00000080834.15">
    <molecule id="Q6P9Y7-1"/>
    <property type="protein sequence ID" value="ENSMUSP00000079647.8"/>
    <property type="gene ID" value="ENSMUSG00000098022.8"/>
</dbReference>
<dbReference type="Ensembl" id="ENSMUST00000183190.2">
    <molecule id="Q6P9Y7-3"/>
    <property type="protein sequence ID" value="ENSMUSP00000138469.2"/>
    <property type="gene ID" value="ENSMUSG00000098022.8"/>
</dbReference>
<dbReference type="GeneID" id="330502"/>
<dbReference type="KEGG" id="mmu:330502"/>
<dbReference type="UCSC" id="uc009gcz.2">
    <molecule id="Q6P9Y7-1"/>
    <property type="organism name" value="mouse"/>
</dbReference>
<dbReference type="UCSC" id="uc009gdc.2">
    <molecule id="Q6P9Y7-3"/>
    <property type="organism name" value="mouse"/>
</dbReference>
<dbReference type="AGR" id="MGI:1890753"/>
<dbReference type="CTD" id="284406"/>
<dbReference type="MGI" id="MGI:1890753">
    <property type="gene designation" value="Zfp82"/>
</dbReference>
<dbReference type="VEuPathDB" id="HostDB:ENSMUSG00000098022"/>
<dbReference type="eggNOG" id="KOG1721">
    <property type="taxonomic scope" value="Eukaryota"/>
</dbReference>
<dbReference type="GeneTree" id="ENSGT00940000162531"/>
<dbReference type="HOGENOM" id="CLU_002678_69_8_1"/>
<dbReference type="InParanoid" id="Q6P9Y7"/>
<dbReference type="OMA" id="QHQSIHV"/>
<dbReference type="OrthoDB" id="1741at9989"/>
<dbReference type="PhylomeDB" id="Q6P9Y7"/>
<dbReference type="TreeFam" id="TF341817"/>
<dbReference type="BioGRID-ORCS" id="330502">
    <property type="hits" value="3 hits in 79 CRISPR screens"/>
</dbReference>
<dbReference type="ChiTaRS" id="Zfp82">
    <property type="organism name" value="mouse"/>
</dbReference>
<dbReference type="PRO" id="PR:Q6P9Y7"/>
<dbReference type="Proteomes" id="UP000000589">
    <property type="component" value="Chromosome 7"/>
</dbReference>
<dbReference type="RNAct" id="Q6P9Y7">
    <property type="molecule type" value="protein"/>
</dbReference>
<dbReference type="Bgee" id="ENSMUSG00000098022">
    <property type="expression patterns" value="Expressed in cortical plate and 69 other cell types or tissues"/>
</dbReference>
<dbReference type="ExpressionAtlas" id="Q6P9Y7">
    <property type="expression patterns" value="baseline and differential"/>
</dbReference>
<dbReference type="GO" id="GO:0005634">
    <property type="term" value="C:nucleus"/>
    <property type="evidence" value="ECO:0007669"/>
    <property type="project" value="UniProtKB-SubCell"/>
</dbReference>
<dbReference type="GO" id="GO:0003677">
    <property type="term" value="F:DNA binding"/>
    <property type="evidence" value="ECO:0007669"/>
    <property type="project" value="UniProtKB-KW"/>
</dbReference>
<dbReference type="GO" id="GO:0008270">
    <property type="term" value="F:zinc ion binding"/>
    <property type="evidence" value="ECO:0007669"/>
    <property type="project" value="UniProtKB-KW"/>
</dbReference>
<dbReference type="GO" id="GO:0006355">
    <property type="term" value="P:regulation of DNA-templated transcription"/>
    <property type="evidence" value="ECO:0007669"/>
    <property type="project" value="InterPro"/>
</dbReference>
<dbReference type="CDD" id="cd07765">
    <property type="entry name" value="KRAB_A-box"/>
    <property type="match status" value="1"/>
</dbReference>
<dbReference type="FunFam" id="3.30.160.60:FF:000020">
    <property type="entry name" value="Zinc finger protein 14 homolog"/>
    <property type="match status" value="3"/>
</dbReference>
<dbReference type="FunFam" id="3.30.160.60:FF:000473">
    <property type="entry name" value="zinc finger protein 14 homolog isoform X1"/>
    <property type="match status" value="1"/>
</dbReference>
<dbReference type="FunFam" id="3.30.160.60:FF:001121">
    <property type="entry name" value="zinc finger protein 3 homolog"/>
    <property type="match status" value="1"/>
</dbReference>
<dbReference type="FunFam" id="3.30.160.60:FF:000561">
    <property type="entry name" value="Zinc finger protein 30 homolog"/>
    <property type="match status" value="2"/>
</dbReference>
<dbReference type="FunFam" id="3.30.160.60:FF:002254">
    <property type="entry name" value="Zinc finger protein 540"/>
    <property type="match status" value="2"/>
</dbReference>
<dbReference type="FunFam" id="3.30.160.60:FF:000052">
    <property type="entry name" value="zinc finger protein 546 isoform X1"/>
    <property type="match status" value="1"/>
</dbReference>
<dbReference type="FunFam" id="3.30.160.60:FF:000737">
    <property type="entry name" value="Zinc finger protein 565"/>
    <property type="match status" value="1"/>
</dbReference>
<dbReference type="FunFam" id="3.30.160.60:FF:001270">
    <property type="entry name" value="zinc finger protein 583 isoform X1"/>
    <property type="match status" value="1"/>
</dbReference>
<dbReference type="FunFam" id="3.30.160.60:FF:002355">
    <property type="entry name" value="Zinc finger protein 623"/>
    <property type="match status" value="1"/>
</dbReference>
<dbReference type="Gene3D" id="6.10.140.140">
    <property type="match status" value="1"/>
</dbReference>
<dbReference type="Gene3D" id="3.30.160.60">
    <property type="entry name" value="Classic Zinc Finger"/>
    <property type="match status" value="13"/>
</dbReference>
<dbReference type="InterPro" id="IPR001909">
    <property type="entry name" value="KRAB"/>
</dbReference>
<dbReference type="InterPro" id="IPR036051">
    <property type="entry name" value="KRAB_dom_sf"/>
</dbReference>
<dbReference type="InterPro" id="IPR036236">
    <property type="entry name" value="Znf_C2H2_sf"/>
</dbReference>
<dbReference type="InterPro" id="IPR013087">
    <property type="entry name" value="Znf_C2H2_type"/>
</dbReference>
<dbReference type="PANTHER" id="PTHR24381">
    <property type="entry name" value="ZINC FINGER PROTEIN"/>
    <property type="match status" value="1"/>
</dbReference>
<dbReference type="PANTHER" id="PTHR24381:SF390">
    <property type="entry name" value="ZINC FINGER PROTEIN 37 HOMOLOG"/>
    <property type="match status" value="1"/>
</dbReference>
<dbReference type="Pfam" id="PF01352">
    <property type="entry name" value="KRAB"/>
    <property type="match status" value="1"/>
</dbReference>
<dbReference type="Pfam" id="PF00096">
    <property type="entry name" value="zf-C2H2"/>
    <property type="match status" value="12"/>
</dbReference>
<dbReference type="SMART" id="SM00349">
    <property type="entry name" value="KRAB"/>
    <property type="match status" value="1"/>
</dbReference>
<dbReference type="SMART" id="SM00355">
    <property type="entry name" value="ZnF_C2H2"/>
    <property type="match status" value="13"/>
</dbReference>
<dbReference type="SUPFAM" id="SSF57667">
    <property type="entry name" value="beta-beta-alpha zinc fingers"/>
    <property type="match status" value="7"/>
</dbReference>
<dbReference type="SUPFAM" id="SSF109640">
    <property type="entry name" value="KRAB domain (Kruppel-associated box)"/>
    <property type="match status" value="1"/>
</dbReference>
<dbReference type="PROSITE" id="PS50805">
    <property type="entry name" value="KRAB"/>
    <property type="match status" value="1"/>
</dbReference>
<dbReference type="PROSITE" id="PS00028">
    <property type="entry name" value="ZINC_FINGER_C2H2_1"/>
    <property type="match status" value="12"/>
</dbReference>
<dbReference type="PROSITE" id="PS50157">
    <property type="entry name" value="ZINC_FINGER_C2H2_2"/>
    <property type="match status" value="13"/>
</dbReference>
<evidence type="ECO:0000250" key="1">
    <source>
        <dbReference type="UniProtKB" id="Q8N141"/>
    </source>
</evidence>
<evidence type="ECO:0000255" key="2">
    <source>
        <dbReference type="PROSITE-ProRule" id="PRU00042"/>
    </source>
</evidence>
<evidence type="ECO:0000255" key="3">
    <source>
        <dbReference type="PROSITE-ProRule" id="PRU00119"/>
    </source>
</evidence>
<evidence type="ECO:0000303" key="4">
    <source>
    </source>
</evidence>
<evidence type="ECO:0000303" key="5">
    <source>
    </source>
</evidence>
<evidence type="ECO:0000305" key="6"/>
<reference key="1">
    <citation type="journal article" date="2005" name="Science">
        <title>The transcriptional landscape of the mammalian genome.</title>
        <authorList>
            <person name="Carninci P."/>
            <person name="Kasukawa T."/>
            <person name="Katayama S."/>
            <person name="Gough J."/>
            <person name="Frith M.C."/>
            <person name="Maeda N."/>
            <person name="Oyama R."/>
            <person name="Ravasi T."/>
            <person name="Lenhard B."/>
            <person name="Wells C."/>
            <person name="Kodzius R."/>
            <person name="Shimokawa K."/>
            <person name="Bajic V.B."/>
            <person name="Brenner S.E."/>
            <person name="Batalov S."/>
            <person name="Forrest A.R."/>
            <person name="Zavolan M."/>
            <person name="Davis M.J."/>
            <person name="Wilming L.G."/>
            <person name="Aidinis V."/>
            <person name="Allen J.E."/>
            <person name="Ambesi-Impiombato A."/>
            <person name="Apweiler R."/>
            <person name="Aturaliya R.N."/>
            <person name="Bailey T.L."/>
            <person name="Bansal M."/>
            <person name="Baxter L."/>
            <person name="Beisel K.W."/>
            <person name="Bersano T."/>
            <person name="Bono H."/>
            <person name="Chalk A.M."/>
            <person name="Chiu K.P."/>
            <person name="Choudhary V."/>
            <person name="Christoffels A."/>
            <person name="Clutterbuck D.R."/>
            <person name="Crowe M.L."/>
            <person name="Dalla E."/>
            <person name="Dalrymple B.P."/>
            <person name="de Bono B."/>
            <person name="Della Gatta G."/>
            <person name="di Bernardo D."/>
            <person name="Down T."/>
            <person name="Engstrom P."/>
            <person name="Fagiolini M."/>
            <person name="Faulkner G."/>
            <person name="Fletcher C.F."/>
            <person name="Fukushima T."/>
            <person name="Furuno M."/>
            <person name="Futaki S."/>
            <person name="Gariboldi M."/>
            <person name="Georgii-Hemming P."/>
            <person name="Gingeras T.R."/>
            <person name="Gojobori T."/>
            <person name="Green R.E."/>
            <person name="Gustincich S."/>
            <person name="Harbers M."/>
            <person name="Hayashi Y."/>
            <person name="Hensch T.K."/>
            <person name="Hirokawa N."/>
            <person name="Hill D."/>
            <person name="Huminiecki L."/>
            <person name="Iacono M."/>
            <person name="Ikeo K."/>
            <person name="Iwama A."/>
            <person name="Ishikawa T."/>
            <person name="Jakt M."/>
            <person name="Kanapin A."/>
            <person name="Katoh M."/>
            <person name="Kawasawa Y."/>
            <person name="Kelso J."/>
            <person name="Kitamura H."/>
            <person name="Kitano H."/>
            <person name="Kollias G."/>
            <person name="Krishnan S.P."/>
            <person name="Kruger A."/>
            <person name="Kummerfeld S.K."/>
            <person name="Kurochkin I.V."/>
            <person name="Lareau L.F."/>
            <person name="Lazarevic D."/>
            <person name="Lipovich L."/>
            <person name="Liu J."/>
            <person name="Liuni S."/>
            <person name="McWilliam S."/>
            <person name="Madan Babu M."/>
            <person name="Madera M."/>
            <person name="Marchionni L."/>
            <person name="Matsuda H."/>
            <person name="Matsuzawa S."/>
            <person name="Miki H."/>
            <person name="Mignone F."/>
            <person name="Miyake S."/>
            <person name="Morris K."/>
            <person name="Mottagui-Tabar S."/>
            <person name="Mulder N."/>
            <person name="Nakano N."/>
            <person name="Nakauchi H."/>
            <person name="Ng P."/>
            <person name="Nilsson R."/>
            <person name="Nishiguchi S."/>
            <person name="Nishikawa S."/>
            <person name="Nori F."/>
            <person name="Ohara O."/>
            <person name="Okazaki Y."/>
            <person name="Orlando V."/>
            <person name="Pang K.C."/>
            <person name="Pavan W.J."/>
            <person name="Pavesi G."/>
            <person name="Pesole G."/>
            <person name="Petrovsky N."/>
            <person name="Piazza S."/>
            <person name="Reed J."/>
            <person name="Reid J.F."/>
            <person name="Ring B.Z."/>
            <person name="Ringwald M."/>
            <person name="Rost B."/>
            <person name="Ruan Y."/>
            <person name="Salzberg S.L."/>
            <person name="Sandelin A."/>
            <person name="Schneider C."/>
            <person name="Schoenbach C."/>
            <person name="Sekiguchi K."/>
            <person name="Semple C.A."/>
            <person name="Seno S."/>
            <person name="Sessa L."/>
            <person name="Sheng Y."/>
            <person name="Shibata Y."/>
            <person name="Shimada H."/>
            <person name="Shimada K."/>
            <person name="Silva D."/>
            <person name="Sinclair B."/>
            <person name="Sperling S."/>
            <person name="Stupka E."/>
            <person name="Sugiura K."/>
            <person name="Sultana R."/>
            <person name="Takenaka Y."/>
            <person name="Taki K."/>
            <person name="Tammoja K."/>
            <person name="Tan S.L."/>
            <person name="Tang S."/>
            <person name="Taylor M.S."/>
            <person name="Tegner J."/>
            <person name="Teichmann S.A."/>
            <person name="Ueda H.R."/>
            <person name="van Nimwegen E."/>
            <person name="Verardo R."/>
            <person name="Wei C.L."/>
            <person name="Yagi K."/>
            <person name="Yamanishi H."/>
            <person name="Zabarovsky E."/>
            <person name="Zhu S."/>
            <person name="Zimmer A."/>
            <person name="Hide W."/>
            <person name="Bult C."/>
            <person name="Grimmond S.M."/>
            <person name="Teasdale R.D."/>
            <person name="Liu E.T."/>
            <person name="Brusic V."/>
            <person name="Quackenbush J."/>
            <person name="Wahlestedt C."/>
            <person name="Mattick J.S."/>
            <person name="Hume D.A."/>
            <person name="Kai C."/>
            <person name="Sasaki D."/>
            <person name="Tomaru Y."/>
            <person name="Fukuda S."/>
            <person name="Kanamori-Katayama M."/>
            <person name="Suzuki M."/>
            <person name="Aoki J."/>
            <person name="Arakawa T."/>
            <person name="Iida J."/>
            <person name="Imamura K."/>
            <person name="Itoh M."/>
            <person name="Kato T."/>
            <person name="Kawaji H."/>
            <person name="Kawagashira N."/>
            <person name="Kawashima T."/>
            <person name="Kojima M."/>
            <person name="Kondo S."/>
            <person name="Konno H."/>
            <person name="Nakano K."/>
            <person name="Ninomiya N."/>
            <person name="Nishio T."/>
            <person name="Okada M."/>
            <person name="Plessy C."/>
            <person name="Shibata K."/>
            <person name="Shiraki T."/>
            <person name="Suzuki S."/>
            <person name="Tagami M."/>
            <person name="Waki K."/>
            <person name="Watahiki A."/>
            <person name="Okamura-Oho Y."/>
            <person name="Suzuki H."/>
            <person name="Kawai J."/>
            <person name="Hayashizaki Y."/>
        </authorList>
    </citation>
    <scope>NUCLEOTIDE SEQUENCE [LARGE SCALE MRNA] (ISOFORM 3)</scope>
    <source>
        <strain>C57BL/6J</strain>
        <tissue>Skin</tissue>
    </source>
</reference>
<reference key="2">
    <citation type="journal article" date="2004" name="Genome Res.">
        <title>The status, quality, and expansion of the NIH full-length cDNA project: the Mammalian Gene Collection (MGC).</title>
        <authorList>
            <consortium name="The MGC Project Team"/>
        </authorList>
    </citation>
    <scope>NUCLEOTIDE SEQUENCE [LARGE SCALE MRNA] (ISOFORM 1)</scope>
    <source>
        <strain>C57BL/6J</strain>
        <tissue>Brain</tissue>
    </source>
</reference>
<reference key="3">
    <citation type="journal article" date="2003" name="DNA Res.">
        <title>Prediction of the coding sequences of mouse homologues of KIAA gene: III. The complete nucleotide sequences of 500 mouse KIAA-homologous cDNAs identified by screening of terminal sequences of cDNA clones randomly sampled from size-fractionated libraries.</title>
        <authorList>
            <person name="Okazaki N."/>
            <person name="Kikuno R."/>
            <person name="Ohara R."/>
            <person name="Inamoto S."/>
            <person name="Koseki H."/>
            <person name="Hiraoka S."/>
            <person name="Saga Y."/>
            <person name="Nagase T."/>
            <person name="Ohara O."/>
            <person name="Koga H."/>
        </authorList>
    </citation>
    <scope>NUCLEOTIDE SEQUENCE [LARGE SCALE MRNA] OF 68-530 (ISOFORM 2)</scope>
    <source>
        <tissue>Embryonic tail</tissue>
    </source>
</reference>
<keyword id="KW-0025">Alternative splicing</keyword>
<keyword id="KW-0238">DNA-binding</keyword>
<keyword id="KW-1017">Isopeptide bond</keyword>
<keyword id="KW-0479">Metal-binding</keyword>
<keyword id="KW-0539">Nucleus</keyword>
<keyword id="KW-1185">Reference proteome</keyword>
<keyword id="KW-0677">Repeat</keyword>
<keyword id="KW-0804">Transcription</keyword>
<keyword id="KW-0805">Transcription regulation</keyword>
<keyword id="KW-0832">Ubl conjugation</keyword>
<keyword id="KW-0862">Zinc</keyword>
<keyword id="KW-0863">Zinc-finger</keyword>
<gene>
    <name type="primary">Zfp82</name>
    <name type="synonym">Kiaa1948</name>
    <name type="synonym">Znf545</name>
</gene>